<name>KEFB_SALTI</name>
<gene>
    <name evidence="1" type="primary">kefB</name>
    <name type="ordered locus">STY4341</name>
    <name type="ordered locus">t4048</name>
</gene>
<dbReference type="EMBL" id="AL513382">
    <property type="protein sequence ID" value="CAD08156.1"/>
    <property type="molecule type" value="Genomic_DNA"/>
</dbReference>
<dbReference type="EMBL" id="AE014613">
    <property type="protein sequence ID" value="AAO71515.1"/>
    <property type="molecule type" value="Genomic_DNA"/>
</dbReference>
<dbReference type="RefSeq" id="NP_458443.1">
    <property type="nucleotide sequence ID" value="NC_003198.1"/>
</dbReference>
<dbReference type="RefSeq" id="WP_000398137.1">
    <property type="nucleotide sequence ID" value="NZ_WSUR01000001.1"/>
</dbReference>
<dbReference type="SMR" id="Q8Z1Y7"/>
<dbReference type="STRING" id="220341.gene:17588169"/>
<dbReference type="KEGG" id="stt:t4048"/>
<dbReference type="KEGG" id="sty:STY4341"/>
<dbReference type="PATRIC" id="fig|220341.7.peg.4436"/>
<dbReference type="eggNOG" id="COG0475">
    <property type="taxonomic scope" value="Bacteria"/>
</dbReference>
<dbReference type="eggNOG" id="COG1226">
    <property type="taxonomic scope" value="Bacteria"/>
</dbReference>
<dbReference type="HOGENOM" id="CLU_005126_9_3_6"/>
<dbReference type="OMA" id="AHFRKLD"/>
<dbReference type="OrthoDB" id="9781411at2"/>
<dbReference type="Proteomes" id="UP000000541">
    <property type="component" value="Chromosome"/>
</dbReference>
<dbReference type="Proteomes" id="UP000002670">
    <property type="component" value="Chromosome"/>
</dbReference>
<dbReference type="GO" id="GO:0005886">
    <property type="term" value="C:plasma membrane"/>
    <property type="evidence" value="ECO:0007669"/>
    <property type="project" value="UniProtKB-SubCell"/>
</dbReference>
<dbReference type="GO" id="GO:0015503">
    <property type="term" value="F:glutathione-regulated potassium exporter activity"/>
    <property type="evidence" value="ECO:0007669"/>
    <property type="project" value="UniProtKB-UniRule"/>
</dbReference>
<dbReference type="GO" id="GO:1902600">
    <property type="term" value="P:proton transmembrane transport"/>
    <property type="evidence" value="ECO:0007669"/>
    <property type="project" value="InterPro"/>
</dbReference>
<dbReference type="FunFam" id="1.20.1530.20:FF:000001">
    <property type="entry name" value="Glutathione-regulated potassium-efflux system protein KefB"/>
    <property type="match status" value="1"/>
</dbReference>
<dbReference type="FunFam" id="3.40.50.720:FF:000036">
    <property type="entry name" value="Glutathione-regulated potassium-efflux system protein KefB"/>
    <property type="match status" value="1"/>
</dbReference>
<dbReference type="Gene3D" id="1.20.1530.20">
    <property type="match status" value="1"/>
</dbReference>
<dbReference type="Gene3D" id="3.40.50.720">
    <property type="entry name" value="NAD(P)-binding Rossmann-like Domain"/>
    <property type="match status" value="1"/>
</dbReference>
<dbReference type="HAMAP" id="MF_01412">
    <property type="entry name" value="K_H_efflux_KefB"/>
    <property type="match status" value="1"/>
</dbReference>
<dbReference type="InterPro" id="IPR006153">
    <property type="entry name" value="Cation/H_exchanger_TM"/>
</dbReference>
<dbReference type="InterPro" id="IPR004771">
    <property type="entry name" value="K/H_exchanger"/>
</dbReference>
<dbReference type="InterPro" id="IPR020884">
    <property type="entry name" value="K_H_efflux_KefB"/>
</dbReference>
<dbReference type="InterPro" id="IPR006036">
    <property type="entry name" value="K_uptake_TrkA"/>
</dbReference>
<dbReference type="InterPro" id="IPR038770">
    <property type="entry name" value="Na+/solute_symporter_sf"/>
</dbReference>
<dbReference type="InterPro" id="IPR036291">
    <property type="entry name" value="NAD(P)-bd_dom_sf"/>
</dbReference>
<dbReference type="InterPro" id="IPR003148">
    <property type="entry name" value="RCK_N"/>
</dbReference>
<dbReference type="NCBIfam" id="TIGR00932">
    <property type="entry name" value="2a37"/>
    <property type="match status" value="1"/>
</dbReference>
<dbReference type="NCBIfam" id="NF002973">
    <property type="entry name" value="PRK03659.1"/>
    <property type="match status" value="1"/>
</dbReference>
<dbReference type="PANTHER" id="PTHR46157">
    <property type="entry name" value="K(+) EFFLUX ANTIPORTER 3, CHLOROPLASTIC"/>
    <property type="match status" value="1"/>
</dbReference>
<dbReference type="PANTHER" id="PTHR46157:SF4">
    <property type="entry name" value="K(+) EFFLUX ANTIPORTER 3, CHLOROPLASTIC"/>
    <property type="match status" value="1"/>
</dbReference>
<dbReference type="Pfam" id="PF00999">
    <property type="entry name" value="Na_H_Exchanger"/>
    <property type="match status" value="1"/>
</dbReference>
<dbReference type="Pfam" id="PF02254">
    <property type="entry name" value="TrkA_N"/>
    <property type="match status" value="1"/>
</dbReference>
<dbReference type="PRINTS" id="PR00335">
    <property type="entry name" value="KUPTAKETRKA"/>
</dbReference>
<dbReference type="SUPFAM" id="SSF51735">
    <property type="entry name" value="NAD(P)-binding Rossmann-fold domains"/>
    <property type="match status" value="1"/>
</dbReference>
<dbReference type="PROSITE" id="PS51201">
    <property type="entry name" value="RCK_N"/>
    <property type="match status" value="1"/>
</dbReference>
<reference key="1">
    <citation type="journal article" date="2001" name="Nature">
        <title>Complete genome sequence of a multiple drug resistant Salmonella enterica serovar Typhi CT18.</title>
        <authorList>
            <person name="Parkhill J."/>
            <person name="Dougan G."/>
            <person name="James K.D."/>
            <person name="Thomson N.R."/>
            <person name="Pickard D."/>
            <person name="Wain J."/>
            <person name="Churcher C.M."/>
            <person name="Mungall K.L."/>
            <person name="Bentley S.D."/>
            <person name="Holden M.T.G."/>
            <person name="Sebaihia M."/>
            <person name="Baker S."/>
            <person name="Basham D."/>
            <person name="Brooks K."/>
            <person name="Chillingworth T."/>
            <person name="Connerton P."/>
            <person name="Cronin A."/>
            <person name="Davis P."/>
            <person name="Davies R.M."/>
            <person name="Dowd L."/>
            <person name="White N."/>
            <person name="Farrar J."/>
            <person name="Feltwell T."/>
            <person name="Hamlin N."/>
            <person name="Haque A."/>
            <person name="Hien T.T."/>
            <person name="Holroyd S."/>
            <person name="Jagels K."/>
            <person name="Krogh A."/>
            <person name="Larsen T.S."/>
            <person name="Leather S."/>
            <person name="Moule S."/>
            <person name="O'Gaora P."/>
            <person name="Parry C."/>
            <person name="Quail M.A."/>
            <person name="Rutherford K.M."/>
            <person name="Simmonds M."/>
            <person name="Skelton J."/>
            <person name="Stevens K."/>
            <person name="Whitehead S."/>
            <person name="Barrell B.G."/>
        </authorList>
    </citation>
    <scope>NUCLEOTIDE SEQUENCE [LARGE SCALE GENOMIC DNA]</scope>
    <source>
        <strain>CT18</strain>
    </source>
</reference>
<reference key="2">
    <citation type="journal article" date="2003" name="J. Bacteriol.">
        <title>Comparative genomics of Salmonella enterica serovar Typhi strains Ty2 and CT18.</title>
        <authorList>
            <person name="Deng W."/>
            <person name="Liou S.-R."/>
            <person name="Plunkett G. III"/>
            <person name="Mayhew G.F."/>
            <person name="Rose D.J."/>
            <person name="Burland V."/>
            <person name="Kodoyianni V."/>
            <person name="Schwartz D.C."/>
            <person name="Blattner F.R."/>
        </authorList>
    </citation>
    <scope>NUCLEOTIDE SEQUENCE [LARGE SCALE GENOMIC DNA]</scope>
    <source>
        <strain>ATCC 700931 / Ty2</strain>
    </source>
</reference>
<evidence type="ECO:0000255" key="1">
    <source>
        <dbReference type="HAMAP-Rule" id="MF_01412"/>
    </source>
</evidence>
<evidence type="ECO:0000255" key="2">
    <source>
        <dbReference type="PROSITE-ProRule" id="PRU00543"/>
    </source>
</evidence>
<keyword id="KW-0050">Antiport</keyword>
<keyword id="KW-0997">Cell inner membrane</keyword>
<keyword id="KW-1003">Cell membrane</keyword>
<keyword id="KW-0406">Ion transport</keyword>
<keyword id="KW-0472">Membrane</keyword>
<keyword id="KW-0630">Potassium</keyword>
<keyword id="KW-0633">Potassium transport</keyword>
<keyword id="KW-0812">Transmembrane</keyword>
<keyword id="KW-1133">Transmembrane helix</keyword>
<keyword id="KW-0813">Transport</keyword>
<comment type="function">
    <text evidence="1">Pore-forming subunit of a potassium efflux system that confers protection against electrophiles. Catalyzes K(+)/H(+) antiport.</text>
</comment>
<comment type="subunit">
    <text evidence="1">Interacts with the regulatory subunit KefG.</text>
</comment>
<comment type="subcellular location">
    <subcellularLocation>
        <location evidence="1">Cell inner membrane</location>
        <topology evidence="1">Multi-pass membrane protein</topology>
    </subcellularLocation>
</comment>
<comment type="similarity">
    <text evidence="1">Belongs to the monovalent cation:proton antiporter 2 (CPA2) transporter (TC 2.A.37) family. KefB subfamily.</text>
</comment>
<accession>Q8Z1Y7</accession>
<proteinExistence type="inferred from homology"/>
<feature type="chain" id="PRO_0000196601" description="Glutathione-regulated potassium-efflux system protein KefB">
    <location>
        <begin position="1"/>
        <end position="601"/>
    </location>
</feature>
<feature type="transmembrane region" description="Helical" evidence="1">
    <location>
        <begin position="4"/>
        <end position="24"/>
    </location>
</feature>
<feature type="transmembrane region" description="Helical" evidence="1">
    <location>
        <begin position="29"/>
        <end position="49"/>
    </location>
</feature>
<feature type="transmembrane region" description="Helical" evidence="1">
    <location>
        <begin position="55"/>
        <end position="75"/>
    </location>
</feature>
<feature type="transmembrane region" description="Helical" evidence="1">
    <location>
        <begin position="87"/>
        <end position="107"/>
    </location>
</feature>
<feature type="transmembrane region" description="Helical" evidence="1">
    <location>
        <begin position="111"/>
        <end position="131"/>
    </location>
</feature>
<feature type="transmembrane region" description="Helical" evidence="1">
    <location>
        <begin position="152"/>
        <end position="172"/>
    </location>
</feature>
<feature type="transmembrane region" description="Helical" evidence="1">
    <location>
        <begin position="177"/>
        <end position="197"/>
    </location>
</feature>
<feature type="transmembrane region" description="Helical" evidence="1">
    <location>
        <begin position="207"/>
        <end position="227"/>
    </location>
</feature>
<feature type="transmembrane region" description="Helical" evidence="1">
    <location>
        <begin position="230"/>
        <end position="250"/>
    </location>
</feature>
<feature type="transmembrane region" description="Helical" evidence="1">
    <location>
        <begin position="262"/>
        <end position="282"/>
    </location>
</feature>
<feature type="transmembrane region" description="Helical" evidence="1">
    <location>
        <begin position="284"/>
        <end position="304"/>
    </location>
</feature>
<feature type="transmembrane region" description="Helical" evidence="1">
    <location>
        <begin position="324"/>
        <end position="344"/>
    </location>
</feature>
<feature type="transmembrane region" description="Helical" evidence="1">
    <location>
        <begin position="356"/>
        <end position="376"/>
    </location>
</feature>
<feature type="domain" description="RCK N-terminal" evidence="2">
    <location>
        <begin position="400"/>
        <end position="519"/>
    </location>
</feature>
<sequence length="601" mass="66388">MEGADLLTAGVLFLFAAVAAVPLAARLGIGAVLGYLLAGIAIGPWGLGFISDVDEILHFSELGVVFLMFIIGLELNPSRLWQLRRSIFGVGAAQVLLSAAVLAGLLMLADFLWQAAVVGGIGLAMSSTAMALQLMREKGMNRSESGQLGFSVLLFQDLAVIPALALVPLLAGSADEHFDWFKVAMKVLAFAVMLIGGRYLLRPVFRFIAASGVREVFTAATLLLVLSAALFMDALGLSMALGTFIAGVLLAESEYRHELENAIDPFKGLLLGLFFISVGMSLNLGVLYTHLLWVAASVVILVVIKMLTLYLLARLYGIRSSERMQFASVLSQGGEFAFVLFSTASSQRLFQGDQMALLLVTVTLSMMTTPLLMKGIDKWLSRRLNGPEENDEKPWVEDDKPQVVVVGFGRFGQVIARLLMANKMRITVLERDIGAVNLMRKYGYKVYYGDATQVELLRSAGAEAAESIVITCNEPEDTMKLVALCQQHFPHLHILARARGRVEAHELLQAGVTQFSRETFSSALELGRKTLVSLGMHPHQAQRAQLHFRRLDMRMLRELIPEHSDMVQISRAREARRELEEIFQREMQQERRQLDGWDEFE</sequence>
<protein>
    <recommendedName>
        <fullName evidence="1">Glutathione-regulated potassium-efflux system protein KefB</fullName>
    </recommendedName>
    <alternativeName>
        <fullName evidence="1">K(+)/H(+) antiporter</fullName>
    </alternativeName>
</protein>
<organism>
    <name type="scientific">Salmonella typhi</name>
    <dbReference type="NCBI Taxonomy" id="90370"/>
    <lineage>
        <taxon>Bacteria</taxon>
        <taxon>Pseudomonadati</taxon>
        <taxon>Pseudomonadota</taxon>
        <taxon>Gammaproteobacteria</taxon>
        <taxon>Enterobacterales</taxon>
        <taxon>Enterobacteriaceae</taxon>
        <taxon>Salmonella</taxon>
    </lineage>
</organism>